<name>RL16_PHYMT</name>
<proteinExistence type="inferred from homology"/>
<gene>
    <name evidence="1" type="primary">rplP</name>
    <name type="ordered locus">ATP_00348</name>
</gene>
<evidence type="ECO:0000255" key="1">
    <source>
        <dbReference type="HAMAP-Rule" id="MF_01342"/>
    </source>
</evidence>
<evidence type="ECO:0000305" key="2"/>
<keyword id="KW-1185">Reference proteome</keyword>
<keyword id="KW-0687">Ribonucleoprotein</keyword>
<keyword id="KW-0689">Ribosomal protein</keyword>
<keyword id="KW-0694">RNA-binding</keyword>
<keyword id="KW-0699">rRNA-binding</keyword>
<keyword id="KW-0820">tRNA-binding</keyword>
<feature type="chain" id="PRO_1000166372" description="Large ribosomal subunit protein uL16">
    <location>
        <begin position="1"/>
        <end position="140"/>
    </location>
</feature>
<organism>
    <name type="scientific">Phytoplasma mali (strain AT)</name>
    <dbReference type="NCBI Taxonomy" id="482235"/>
    <lineage>
        <taxon>Bacteria</taxon>
        <taxon>Bacillati</taxon>
        <taxon>Mycoplasmatota</taxon>
        <taxon>Mollicutes</taxon>
        <taxon>Acholeplasmatales</taxon>
        <taxon>Acholeplasmataceae</taxon>
        <taxon>Candidatus Phytoplasma</taxon>
        <taxon>16SrX (Apple proliferation group)</taxon>
    </lineage>
</organism>
<accession>B3QZZ8</accession>
<sequence length="140" mass="15953">MLMPKRTKYRRPHRLSYEGKVKGKNLIVNGNYGLIAQEGNWITNKQIEAARIAMTRHMKRTGKVWINIFPHLSLTRKPLEVRMGSGKGAPEEWVAVVKKGKVLFEVSDLNNSVKAELEALRLASHKLPIKTKIVKKGEQK</sequence>
<protein>
    <recommendedName>
        <fullName evidence="1">Large ribosomal subunit protein uL16</fullName>
    </recommendedName>
    <alternativeName>
        <fullName evidence="2">50S ribosomal protein L16</fullName>
    </alternativeName>
</protein>
<comment type="function">
    <text evidence="1">Binds 23S rRNA and is also seen to make contacts with the A and possibly P site tRNAs.</text>
</comment>
<comment type="subunit">
    <text evidence="1">Part of the 50S ribosomal subunit.</text>
</comment>
<comment type="similarity">
    <text evidence="1">Belongs to the universal ribosomal protein uL16 family.</text>
</comment>
<dbReference type="EMBL" id="CU469464">
    <property type="protein sequence ID" value="CAP18535.1"/>
    <property type="molecule type" value="Genomic_DNA"/>
</dbReference>
<dbReference type="SMR" id="B3QZZ8"/>
<dbReference type="STRING" id="37692.ATP_00348"/>
<dbReference type="KEGG" id="pml:ATP_00348"/>
<dbReference type="eggNOG" id="COG0197">
    <property type="taxonomic scope" value="Bacteria"/>
</dbReference>
<dbReference type="HOGENOM" id="CLU_078858_2_1_14"/>
<dbReference type="Proteomes" id="UP000002020">
    <property type="component" value="Chromosome"/>
</dbReference>
<dbReference type="GO" id="GO:0022625">
    <property type="term" value="C:cytosolic large ribosomal subunit"/>
    <property type="evidence" value="ECO:0007669"/>
    <property type="project" value="TreeGrafter"/>
</dbReference>
<dbReference type="GO" id="GO:0019843">
    <property type="term" value="F:rRNA binding"/>
    <property type="evidence" value="ECO:0007669"/>
    <property type="project" value="UniProtKB-UniRule"/>
</dbReference>
<dbReference type="GO" id="GO:0003735">
    <property type="term" value="F:structural constituent of ribosome"/>
    <property type="evidence" value="ECO:0007669"/>
    <property type="project" value="InterPro"/>
</dbReference>
<dbReference type="GO" id="GO:0000049">
    <property type="term" value="F:tRNA binding"/>
    <property type="evidence" value="ECO:0007669"/>
    <property type="project" value="UniProtKB-KW"/>
</dbReference>
<dbReference type="GO" id="GO:0006412">
    <property type="term" value="P:translation"/>
    <property type="evidence" value="ECO:0007669"/>
    <property type="project" value="UniProtKB-UniRule"/>
</dbReference>
<dbReference type="CDD" id="cd01433">
    <property type="entry name" value="Ribosomal_L16_L10e"/>
    <property type="match status" value="1"/>
</dbReference>
<dbReference type="FunFam" id="3.90.1170.10:FF:000001">
    <property type="entry name" value="50S ribosomal protein L16"/>
    <property type="match status" value="1"/>
</dbReference>
<dbReference type="Gene3D" id="3.90.1170.10">
    <property type="entry name" value="Ribosomal protein L10e/L16"/>
    <property type="match status" value="1"/>
</dbReference>
<dbReference type="HAMAP" id="MF_01342">
    <property type="entry name" value="Ribosomal_uL16"/>
    <property type="match status" value="1"/>
</dbReference>
<dbReference type="InterPro" id="IPR047873">
    <property type="entry name" value="Ribosomal_uL16"/>
</dbReference>
<dbReference type="InterPro" id="IPR000114">
    <property type="entry name" value="Ribosomal_uL16_bact-type"/>
</dbReference>
<dbReference type="InterPro" id="IPR020798">
    <property type="entry name" value="Ribosomal_uL16_CS"/>
</dbReference>
<dbReference type="InterPro" id="IPR016180">
    <property type="entry name" value="Ribosomal_uL16_dom"/>
</dbReference>
<dbReference type="InterPro" id="IPR036920">
    <property type="entry name" value="Ribosomal_uL16_sf"/>
</dbReference>
<dbReference type="NCBIfam" id="TIGR01164">
    <property type="entry name" value="rplP_bact"/>
    <property type="match status" value="1"/>
</dbReference>
<dbReference type="PANTHER" id="PTHR12220">
    <property type="entry name" value="50S/60S RIBOSOMAL PROTEIN L16"/>
    <property type="match status" value="1"/>
</dbReference>
<dbReference type="PANTHER" id="PTHR12220:SF13">
    <property type="entry name" value="LARGE RIBOSOMAL SUBUNIT PROTEIN UL16M"/>
    <property type="match status" value="1"/>
</dbReference>
<dbReference type="Pfam" id="PF00252">
    <property type="entry name" value="Ribosomal_L16"/>
    <property type="match status" value="1"/>
</dbReference>
<dbReference type="PRINTS" id="PR00060">
    <property type="entry name" value="RIBOSOMALL16"/>
</dbReference>
<dbReference type="SUPFAM" id="SSF54686">
    <property type="entry name" value="Ribosomal protein L16p/L10e"/>
    <property type="match status" value="1"/>
</dbReference>
<dbReference type="PROSITE" id="PS00586">
    <property type="entry name" value="RIBOSOMAL_L16_1"/>
    <property type="match status" value="1"/>
</dbReference>
<dbReference type="PROSITE" id="PS00701">
    <property type="entry name" value="RIBOSOMAL_L16_2"/>
    <property type="match status" value="1"/>
</dbReference>
<reference key="1">
    <citation type="journal article" date="2008" name="BMC Genomics">
        <title>The linear chromosome of the plant-pathogenic mycoplasma 'Candidatus Phytoplasma mali'.</title>
        <authorList>
            <person name="Kube M."/>
            <person name="Schneider B."/>
            <person name="Kuhl H."/>
            <person name="Dandekar T."/>
            <person name="Heitmann K."/>
            <person name="Migdoll A.M."/>
            <person name="Reinhardt R."/>
            <person name="Seemueller E."/>
        </authorList>
    </citation>
    <scope>NUCLEOTIDE SEQUENCE [LARGE SCALE GENOMIC DNA]</scope>
    <source>
        <strain>AT</strain>
    </source>
</reference>